<comment type="function">
    <text evidence="1">F(1)F(0) ATP synthase produces ATP from ADP in the presence of a proton or sodium gradient. F-type ATPases consist of two structural domains, F(1) containing the extramembraneous catalytic core and F(0) containing the membrane proton channel, linked together by a central stalk and a peripheral stalk. During catalysis, ATP synthesis in the catalytic domain of F(1) is coupled via a rotary mechanism of the central stalk subunits to proton translocation.</text>
</comment>
<comment type="function">
    <text evidence="1">This protein is part of the stalk that links CF(0) to CF(1). It either transmits conformational changes from CF(0) to CF(1) or is implicated in proton conduction.</text>
</comment>
<comment type="subunit">
    <text evidence="1">F-type ATPases have 2 components, F(1) - the catalytic core - and F(0) - the membrane proton channel. F(1) has five subunits: alpha(3), beta(3), gamma(1), delta(1), epsilon(1). F(0) has three main subunits: a(1), b(2) and c(10-14). The alpha and beta chains form an alternating ring which encloses part of the gamma chain. F(1) is attached to F(0) by a central stalk formed by the gamma and epsilon chains, while a peripheral stalk is formed by the delta and b chains.</text>
</comment>
<comment type="subcellular location">
    <subcellularLocation>
        <location evidence="1">Cell inner membrane</location>
        <topology evidence="1">Peripheral membrane protein</topology>
    </subcellularLocation>
</comment>
<comment type="similarity">
    <text evidence="1">Belongs to the ATPase delta chain family.</text>
</comment>
<keyword id="KW-0066">ATP synthesis</keyword>
<keyword id="KW-0997">Cell inner membrane</keyword>
<keyword id="KW-1003">Cell membrane</keyword>
<keyword id="KW-0139">CF(1)</keyword>
<keyword id="KW-0375">Hydrogen ion transport</keyword>
<keyword id="KW-0406">Ion transport</keyword>
<keyword id="KW-0472">Membrane</keyword>
<keyword id="KW-0813">Transport</keyword>
<name>ATPD_ECOSM</name>
<gene>
    <name evidence="1" type="primary">atpH</name>
    <name type="ordered locus">EcSMS35_4103</name>
</gene>
<evidence type="ECO:0000255" key="1">
    <source>
        <dbReference type="HAMAP-Rule" id="MF_01416"/>
    </source>
</evidence>
<accession>B1LL62</accession>
<protein>
    <recommendedName>
        <fullName evidence="1">ATP synthase subunit delta</fullName>
    </recommendedName>
    <alternativeName>
        <fullName evidence="1">ATP synthase F(1) sector subunit delta</fullName>
    </alternativeName>
    <alternativeName>
        <fullName evidence="1">F-type ATPase subunit delta</fullName>
        <shortName evidence="1">F-ATPase subunit delta</shortName>
    </alternativeName>
</protein>
<proteinExistence type="inferred from homology"/>
<reference key="1">
    <citation type="journal article" date="2008" name="J. Bacteriol.">
        <title>Insights into the environmental resistance gene pool from the genome sequence of the multidrug-resistant environmental isolate Escherichia coli SMS-3-5.</title>
        <authorList>
            <person name="Fricke W.F."/>
            <person name="Wright M.S."/>
            <person name="Lindell A.H."/>
            <person name="Harkins D.M."/>
            <person name="Baker-Austin C."/>
            <person name="Ravel J."/>
            <person name="Stepanauskas R."/>
        </authorList>
    </citation>
    <scope>NUCLEOTIDE SEQUENCE [LARGE SCALE GENOMIC DNA]</scope>
    <source>
        <strain>SMS-3-5 / SECEC</strain>
    </source>
</reference>
<sequence>MSEFITVARPYAKAAFDFAVEHQSVERWQDMLAFAAEVTKNEQMAELLSGALAPETLAESFIAVCGEQLDENGQNLIRVMAENGRLNALPDVLEQFIHLRAVSEATAEVDVISAAALSEQQLAKISAAMEKRLSRKVKLNCKIDKSVMAGVIIRAGDMVIDGSVRGRLERLADVLQS</sequence>
<feature type="chain" id="PRO_0000370974" description="ATP synthase subunit delta">
    <location>
        <begin position="1"/>
        <end position="177"/>
    </location>
</feature>
<dbReference type="EMBL" id="CP000970">
    <property type="protein sequence ID" value="ACB15805.1"/>
    <property type="molecule type" value="Genomic_DNA"/>
</dbReference>
<dbReference type="RefSeq" id="WP_001288587.1">
    <property type="nucleotide sequence ID" value="NC_010498.1"/>
</dbReference>
<dbReference type="SMR" id="B1LL62"/>
<dbReference type="GeneID" id="93778232"/>
<dbReference type="KEGG" id="ecm:EcSMS35_4103"/>
<dbReference type="HOGENOM" id="CLU_085114_3_0_6"/>
<dbReference type="Proteomes" id="UP000007011">
    <property type="component" value="Chromosome"/>
</dbReference>
<dbReference type="GO" id="GO:0005886">
    <property type="term" value="C:plasma membrane"/>
    <property type="evidence" value="ECO:0007669"/>
    <property type="project" value="UniProtKB-SubCell"/>
</dbReference>
<dbReference type="GO" id="GO:0045259">
    <property type="term" value="C:proton-transporting ATP synthase complex"/>
    <property type="evidence" value="ECO:0007669"/>
    <property type="project" value="UniProtKB-KW"/>
</dbReference>
<dbReference type="GO" id="GO:0046933">
    <property type="term" value="F:proton-transporting ATP synthase activity, rotational mechanism"/>
    <property type="evidence" value="ECO:0007669"/>
    <property type="project" value="UniProtKB-UniRule"/>
</dbReference>
<dbReference type="FunFam" id="1.10.520.20:FF:000001">
    <property type="entry name" value="ATP synthase subunit delta"/>
    <property type="match status" value="1"/>
</dbReference>
<dbReference type="Gene3D" id="1.10.520.20">
    <property type="entry name" value="N-terminal domain of the delta subunit of the F1F0-ATP synthase"/>
    <property type="match status" value="1"/>
</dbReference>
<dbReference type="HAMAP" id="MF_01416">
    <property type="entry name" value="ATP_synth_delta_bact"/>
    <property type="match status" value="1"/>
</dbReference>
<dbReference type="InterPro" id="IPR026015">
    <property type="entry name" value="ATP_synth_OSCP/delta_N_sf"/>
</dbReference>
<dbReference type="InterPro" id="IPR020781">
    <property type="entry name" value="ATPase_OSCP/d_CS"/>
</dbReference>
<dbReference type="InterPro" id="IPR000711">
    <property type="entry name" value="ATPase_OSCP/dsu"/>
</dbReference>
<dbReference type="NCBIfam" id="TIGR01145">
    <property type="entry name" value="ATP_synt_delta"/>
    <property type="match status" value="1"/>
</dbReference>
<dbReference type="NCBIfam" id="NF004402">
    <property type="entry name" value="PRK05758.2-2"/>
    <property type="match status" value="1"/>
</dbReference>
<dbReference type="NCBIfam" id="NF004404">
    <property type="entry name" value="PRK05758.2-5"/>
    <property type="match status" value="1"/>
</dbReference>
<dbReference type="PANTHER" id="PTHR11910">
    <property type="entry name" value="ATP SYNTHASE DELTA CHAIN"/>
    <property type="match status" value="1"/>
</dbReference>
<dbReference type="Pfam" id="PF00213">
    <property type="entry name" value="OSCP"/>
    <property type="match status" value="1"/>
</dbReference>
<dbReference type="PRINTS" id="PR00125">
    <property type="entry name" value="ATPASEDELTA"/>
</dbReference>
<dbReference type="SUPFAM" id="SSF47928">
    <property type="entry name" value="N-terminal domain of the delta subunit of the F1F0-ATP synthase"/>
    <property type="match status" value="1"/>
</dbReference>
<dbReference type="PROSITE" id="PS00389">
    <property type="entry name" value="ATPASE_DELTA"/>
    <property type="match status" value="1"/>
</dbReference>
<organism>
    <name type="scientific">Escherichia coli (strain SMS-3-5 / SECEC)</name>
    <dbReference type="NCBI Taxonomy" id="439855"/>
    <lineage>
        <taxon>Bacteria</taxon>
        <taxon>Pseudomonadati</taxon>
        <taxon>Pseudomonadota</taxon>
        <taxon>Gammaproteobacteria</taxon>
        <taxon>Enterobacterales</taxon>
        <taxon>Enterobacteriaceae</taxon>
        <taxon>Escherichia</taxon>
    </lineage>
</organism>